<feature type="chain" id="PRO_0000241255" description="Aspartyl/glutamyl-tRNA(Asn/Gln) amidotransferase subunit B">
    <location>
        <begin position="1"/>
        <end position="491"/>
    </location>
</feature>
<organism>
    <name type="scientific">Prochlorococcus marinus (strain NATL2A)</name>
    <dbReference type="NCBI Taxonomy" id="59920"/>
    <lineage>
        <taxon>Bacteria</taxon>
        <taxon>Bacillati</taxon>
        <taxon>Cyanobacteriota</taxon>
        <taxon>Cyanophyceae</taxon>
        <taxon>Synechococcales</taxon>
        <taxon>Prochlorococcaceae</taxon>
        <taxon>Prochlorococcus</taxon>
    </lineage>
</organism>
<protein>
    <recommendedName>
        <fullName evidence="1">Aspartyl/glutamyl-tRNA(Asn/Gln) amidotransferase subunit B</fullName>
        <shortName evidence="1">Asp/Glu-ADT subunit B</shortName>
        <ecNumber evidence="1">6.3.5.-</ecNumber>
    </recommendedName>
</protein>
<dbReference type="EC" id="6.3.5.-" evidence="1"/>
<dbReference type="EMBL" id="CP000095">
    <property type="protein sequence ID" value="AAZ58869.1"/>
    <property type="molecule type" value="Genomic_DNA"/>
</dbReference>
<dbReference type="RefSeq" id="WP_011294013.1">
    <property type="nucleotide sequence ID" value="NC_007335.2"/>
</dbReference>
<dbReference type="SMR" id="Q46I09"/>
<dbReference type="STRING" id="59920.PMN2A_1381"/>
<dbReference type="KEGG" id="pmn:PMN2A_1381"/>
<dbReference type="HOGENOM" id="CLU_019240_0_0_3"/>
<dbReference type="OrthoDB" id="9804078at2"/>
<dbReference type="PhylomeDB" id="Q46I09"/>
<dbReference type="Proteomes" id="UP000002535">
    <property type="component" value="Chromosome"/>
</dbReference>
<dbReference type="GO" id="GO:0050566">
    <property type="term" value="F:asparaginyl-tRNA synthase (glutamine-hydrolyzing) activity"/>
    <property type="evidence" value="ECO:0007669"/>
    <property type="project" value="RHEA"/>
</dbReference>
<dbReference type="GO" id="GO:0005524">
    <property type="term" value="F:ATP binding"/>
    <property type="evidence" value="ECO:0007669"/>
    <property type="project" value="UniProtKB-KW"/>
</dbReference>
<dbReference type="GO" id="GO:0050567">
    <property type="term" value="F:glutaminyl-tRNA synthase (glutamine-hydrolyzing) activity"/>
    <property type="evidence" value="ECO:0007669"/>
    <property type="project" value="UniProtKB-UniRule"/>
</dbReference>
<dbReference type="GO" id="GO:0070681">
    <property type="term" value="P:glutaminyl-tRNAGln biosynthesis via transamidation"/>
    <property type="evidence" value="ECO:0007669"/>
    <property type="project" value="TreeGrafter"/>
</dbReference>
<dbReference type="GO" id="GO:0006412">
    <property type="term" value="P:translation"/>
    <property type="evidence" value="ECO:0007669"/>
    <property type="project" value="UniProtKB-UniRule"/>
</dbReference>
<dbReference type="FunFam" id="1.10.10.410:FF:000001">
    <property type="entry name" value="Aspartyl/glutamyl-tRNA(Asn/Gln) amidotransferase subunit B"/>
    <property type="match status" value="1"/>
</dbReference>
<dbReference type="FunFam" id="1.10.150.380:FF:000001">
    <property type="entry name" value="Aspartyl/glutamyl-tRNA(Asn/Gln) amidotransferase subunit B"/>
    <property type="match status" value="1"/>
</dbReference>
<dbReference type="Gene3D" id="1.10.10.410">
    <property type="match status" value="1"/>
</dbReference>
<dbReference type="Gene3D" id="1.10.150.380">
    <property type="entry name" value="GatB domain, N-terminal subdomain"/>
    <property type="match status" value="1"/>
</dbReference>
<dbReference type="HAMAP" id="MF_00121">
    <property type="entry name" value="GatB"/>
    <property type="match status" value="1"/>
</dbReference>
<dbReference type="InterPro" id="IPR017959">
    <property type="entry name" value="Asn/Gln-tRNA_amidoTrfase_suB/E"/>
</dbReference>
<dbReference type="InterPro" id="IPR006075">
    <property type="entry name" value="Asn/Gln-tRNA_Trfase_suB/E_cat"/>
</dbReference>
<dbReference type="InterPro" id="IPR018027">
    <property type="entry name" value="Asn/Gln_amidotransferase"/>
</dbReference>
<dbReference type="InterPro" id="IPR003789">
    <property type="entry name" value="Asn/Gln_tRNA_amidoTrase-B-like"/>
</dbReference>
<dbReference type="InterPro" id="IPR004413">
    <property type="entry name" value="GatB"/>
</dbReference>
<dbReference type="InterPro" id="IPR042114">
    <property type="entry name" value="GatB_C_1"/>
</dbReference>
<dbReference type="InterPro" id="IPR023168">
    <property type="entry name" value="GatB_Yqey_C_2"/>
</dbReference>
<dbReference type="InterPro" id="IPR017958">
    <property type="entry name" value="Gln-tRNA_amidoTrfase_suB_CS"/>
</dbReference>
<dbReference type="InterPro" id="IPR014746">
    <property type="entry name" value="Gln_synth/guanido_kin_cat_dom"/>
</dbReference>
<dbReference type="NCBIfam" id="TIGR00133">
    <property type="entry name" value="gatB"/>
    <property type="match status" value="1"/>
</dbReference>
<dbReference type="NCBIfam" id="NF004012">
    <property type="entry name" value="PRK05477.1-2"/>
    <property type="match status" value="1"/>
</dbReference>
<dbReference type="NCBIfam" id="NF004014">
    <property type="entry name" value="PRK05477.1-4"/>
    <property type="match status" value="1"/>
</dbReference>
<dbReference type="PANTHER" id="PTHR11659">
    <property type="entry name" value="GLUTAMYL-TRNA GLN AMIDOTRANSFERASE SUBUNIT B MITOCHONDRIAL AND PROKARYOTIC PET112-RELATED"/>
    <property type="match status" value="1"/>
</dbReference>
<dbReference type="PANTHER" id="PTHR11659:SF0">
    <property type="entry name" value="GLUTAMYL-TRNA(GLN) AMIDOTRANSFERASE SUBUNIT B, MITOCHONDRIAL"/>
    <property type="match status" value="1"/>
</dbReference>
<dbReference type="Pfam" id="PF02934">
    <property type="entry name" value="GatB_N"/>
    <property type="match status" value="1"/>
</dbReference>
<dbReference type="Pfam" id="PF02637">
    <property type="entry name" value="GatB_Yqey"/>
    <property type="match status" value="1"/>
</dbReference>
<dbReference type="SMART" id="SM00845">
    <property type="entry name" value="GatB_Yqey"/>
    <property type="match status" value="1"/>
</dbReference>
<dbReference type="SUPFAM" id="SSF89095">
    <property type="entry name" value="GatB/YqeY motif"/>
    <property type="match status" value="1"/>
</dbReference>
<dbReference type="SUPFAM" id="SSF55931">
    <property type="entry name" value="Glutamine synthetase/guanido kinase"/>
    <property type="match status" value="1"/>
</dbReference>
<dbReference type="PROSITE" id="PS01234">
    <property type="entry name" value="GATB"/>
    <property type="match status" value="1"/>
</dbReference>
<keyword id="KW-0067">ATP-binding</keyword>
<keyword id="KW-0436">Ligase</keyword>
<keyword id="KW-0547">Nucleotide-binding</keyword>
<keyword id="KW-0648">Protein biosynthesis</keyword>
<keyword id="KW-1185">Reference proteome</keyword>
<accession>Q46I09</accession>
<name>GATB_PROMT</name>
<gene>
    <name evidence="1" type="primary">gatB</name>
    <name type="ordered locus">PMN2A_1381</name>
</gene>
<comment type="function">
    <text evidence="1">Allows the formation of correctly charged Asn-tRNA(Asn) or Gln-tRNA(Gln) through the transamidation of misacylated Asp-tRNA(Asn) or Glu-tRNA(Gln) in organisms which lack either or both of asparaginyl-tRNA or glutaminyl-tRNA synthetases. The reaction takes place in the presence of glutamine and ATP through an activated phospho-Asp-tRNA(Asn) or phospho-Glu-tRNA(Gln).</text>
</comment>
<comment type="catalytic activity">
    <reaction evidence="1">
        <text>L-glutamyl-tRNA(Gln) + L-glutamine + ATP + H2O = L-glutaminyl-tRNA(Gln) + L-glutamate + ADP + phosphate + H(+)</text>
        <dbReference type="Rhea" id="RHEA:17521"/>
        <dbReference type="Rhea" id="RHEA-COMP:9681"/>
        <dbReference type="Rhea" id="RHEA-COMP:9684"/>
        <dbReference type="ChEBI" id="CHEBI:15377"/>
        <dbReference type="ChEBI" id="CHEBI:15378"/>
        <dbReference type="ChEBI" id="CHEBI:29985"/>
        <dbReference type="ChEBI" id="CHEBI:30616"/>
        <dbReference type="ChEBI" id="CHEBI:43474"/>
        <dbReference type="ChEBI" id="CHEBI:58359"/>
        <dbReference type="ChEBI" id="CHEBI:78520"/>
        <dbReference type="ChEBI" id="CHEBI:78521"/>
        <dbReference type="ChEBI" id="CHEBI:456216"/>
    </reaction>
</comment>
<comment type="catalytic activity">
    <reaction evidence="1">
        <text>L-aspartyl-tRNA(Asn) + L-glutamine + ATP + H2O = L-asparaginyl-tRNA(Asn) + L-glutamate + ADP + phosphate + 2 H(+)</text>
        <dbReference type="Rhea" id="RHEA:14513"/>
        <dbReference type="Rhea" id="RHEA-COMP:9674"/>
        <dbReference type="Rhea" id="RHEA-COMP:9677"/>
        <dbReference type="ChEBI" id="CHEBI:15377"/>
        <dbReference type="ChEBI" id="CHEBI:15378"/>
        <dbReference type="ChEBI" id="CHEBI:29985"/>
        <dbReference type="ChEBI" id="CHEBI:30616"/>
        <dbReference type="ChEBI" id="CHEBI:43474"/>
        <dbReference type="ChEBI" id="CHEBI:58359"/>
        <dbReference type="ChEBI" id="CHEBI:78515"/>
        <dbReference type="ChEBI" id="CHEBI:78516"/>
        <dbReference type="ChEBI" id="CHEBI:456216"/>
    </reaction>
</comment>
<comment type="subunit">
    <text evidence="1">Heterotrimer of A, B and C subunits.</text>
</comment>
<comment type="similarity">
    <text evidence="1">Belongs to the GatB/GatE family. GatB subfamily.</text>
</comment>
<reference key="1">
    <citation type="journal article" date="2007" name="PLoS Genet.">
        <title>Patterns and implications of gene gain and loss in the evolution of Prochlorococcus.</title>
        <authorList>
            <person name="Kettler G.C."/>
            <person name="Martiny A.C."/>
            <person name="Huang K."/>
            <person name="Zucker J."/>
            <person name="Coleman M.L."/>
            <person name="Rodrigue S."/>
            <person name="Chen F."/>
            <person name="Lapidus A."/>
            <person name="Ferriera S."/>
            <person name="Johnson J."/>
            <person name="Steglich C."/>
            <person name="Church G.M."/>
            <person name="Richardson P."/>
            <person name="Chisholm S.W."/>
        </authorList>
    </citation>
    <scope>NUCLEOTIDE SEQUENCE [LARGE SCALE GENOMIC DNA]</scope>
    <source>
        <strain>NATL2A</strain>
    </source>
</reference>
<proteinExistence type="inferred from homology"/>
<sequence>MSESNVSWEVVIGLETHVQLGTKSKIFTSASTTFGDDPNTHIDPVVCGLPGTLPVLNKKVLEYAVKAAMALNLNIASHSKFDRKQYFYPDLPKNYQISQFDEPIAEDGWIEVEVAEKGKETYVKKIGIERLHMEEDAGKLVHAGSDQLSGSTHSLVDYNRAGVALAEIVSKPDLRTGREAAEYAAEVRRIMRYLGVSDGNMQEGSLRCDVNISVRPTINDPFGTKVEIKNMNSFSAIQKACEYEIKRQIKAYESGEEVKQETRLWDEGKQLTKSMRSKEGSSDYRYFPDPDLGPIEVSNELKEKWRSELPELPAAKRNRYSTELGLSIYDARVLTDESSMATYFEKVVNEGGAAKSSANWITGDLAAYIKSNRLTFDQLHFQPSELAEMLKMIDTGEISGKIAKEILPELLSKGGSPKQLVQERGLGMIGDPKVIEEIIDQLILKHPNEVESFRSGKKKLLGFFVGQLMKETKGKADPKLANQILNKKLQA</sequence>
<evidence type="ECO:0000255" key="1">
    <source>
        <dbReference type="HAMAP-Rule" id="MF_00121"/>
    </source>
</evidence>